<name>DIPA_PROTE</name>
<proteinExistence type="evidence at protein level"/>
<keyword id="KW-0027">Amidation</keyword>
<keyword id="KW-0044">Antibiotic</keyword>
<keyword id="KW-0929">Antimicrobial</keyword>
<keyword id="KW-0903">Direct protein sequencing</keyword>
<keyword id="KW-0391">Immunity</keyword>
<keyword id="KW-0399">Innate immunity</keyword>
<keyword id="KW-0964">Secreted</keyword>
<feature type="chain" id="PRO_0000127107" description="Diptericin-A">
    <location>
        <begin position="1"/>
        <end position="82"/>
    </location>
</feature>
<feature type="region of interest" description="Disordered" evidence="3">
    <location>
        <begin position="1"/>
        <end position="32"/>
    </location>
</feature>
<feature type="region of interest" description="Disordered" evidence="3">
    <location>
        <begin position="45"/>
        <end position="69"/>
    </location>
</feature>
<feature type="modified residue" description="Phenylalanine amide" evidence="1">
    <location>
        <position position="82"/>
    </location>
</feature>
<organism>
    <name type="scientific">Protophormia terraenovae</name>
    <name type="common">Northern blowfly</name>
    <name type="synonym">Lucilia terraenovae</name>
    <dbReference type="NCBI Taxonomy" id="34676"/>
    <lineage>
        <taxon>Eukaryota</taxon>
        <taxon>Metazoa</taxon>
        <taxon>Ecdysozoa</taxon>
        <taxon>Arthropoda</taxon>
        <taxon>Hexapoda</taxon>
        <taxon>Insecta</taxon>
        <taxon>Pterygota</taxon>
        <taxon>Neoptera</taxon>
        <taxon>Endopterygota</taxon>
        <taxon>Diptera</taxon>
        <taxon>Brachycera</taxon>
        <taxon>Muscomorpha</taxon>
        <taxon>Oestroidea</taxon>
        <taxon>Calliphoridae</taxon>
        <taxon>Chrysomyinae</taxon>
        <taxon>Protophormia</taxon>
    </lineage>
</organism>
<evidence type="ECO:0000250" key="1">
    <source>
        <dbReference type="UniProtKB" id="P18684"/>
    </source>
</evidence>
<evidence type="ECO:0000250" key="2">
    <source>
        <dbReference type="UniProtKB" id="P24492"/>
    </source>
</evidence>
<evidence type="ECO:0000256" key="3">
    <source>
        <dbReference type="SAM" id="MobiDB-lite"/>
    </source>
</evidence>
<evidence type="ECO:0000305" key="4"/>
<protein>
    <recommendedName>
        <fullName>Diptericin-A</fullName>
    </recommendedName>
</protein>
<comment type="function">
    <text evidence="2">Antimicrobial peptide required to resist Gram-negative bacterial infections, regulated by Dredd.</text>
</comment>
<comment type="subcellular location">
    <subcellularLocation>
        <location evidence="2">Secreted</location>
    </subcellularLocation>
</comment>
<comment type="miscellaneous">
    <text>There seems to be a family of diptericin in protophormia. Diptericin A is the predominant member.</text>
</comment>
<comment type="similarity">
    <text evidence="4">Belongs to the attacin/sarcotoxin-2 family.</text>
</comment>
<sequence length="82" mass="8619">DEKPKLILPTPAPPNLPQLVGGGGGNRKDGFGVSVDAHQKVWTSDNGGHSIGVSPGYSQHLPGPYGNSRPDYRIGAGYSYNF</sequence>
<dbReference type="PIR" id="S00265">
    <property type="entry name" value="S00265"/>
</dbReference>
<dbReference type="GO" id="GO:0005576">
    <property type="term" value="C:extracellular region"/>
    <property type="evidence" value="ECO:0007669"/>
    <property type="project" value="UniProtKB-SubCell"/>
</dbReference>
<dbReference type="GO" id="GO:0042742">
    <property type="term" value="P:defense response to bacterium"/>
    <property type="evidence" value="ECO:0007669"/>
    <property type="project" value="UniProtKB-KW"/>
</dbReference>
<dbReference type="GO" id="GO:0045087">
    <property type="term" value="P:innate immune response"/>
    <property type="evidence" value="ECO:0007669"/>
    <property type="project" value="UniProtKB-KW"/>
</dbReference>
<accession>P10836</accession>
<reference key="1">
    <citation type="journal article" date="1988" name="Eur. J. Biochem.">
        <title>Insect immunity. Purification and characterization of a family of novel inducible antibacterial proteins from immunized larvae of the dipteran Phormia terranovae and complete amino-acid sequence of the predominant member, diptericin A.</title>
        <authorList>
            <person name="Dimarcq J.-L."/>
            <person name="Keppi E."/>
            <person name="Dunbar B."/>
            <person name="Lambert J."/>
            <person name="Reichhart J.-M."/>
            <person name="Hoffmann D."/>
            <person name="Rankine S.M."/>
            <person name="Fothergill J.E."/>
            <person name="Hoffmann J.A."/>
        </authorList>
    </citation>
    <scope>PROTEIN SEQUENCE</scope>
    <source>
        <tissue>Hemolymph</tissue>
    </source>
</reference>